<accession>B5YH80</accession>
<proteinExistence type="inferred from homology"/>
<gene>
    <name evidence="1" type="primary">aroD</name>
    <name type="ordered locus">THEYE_A1779</name>
</gene>
<sequence length="226" mass="25842">MLLQNIPAIAVVLKDKDVLSIPKEELKGADLIELRVDMFEKTENISDIFETAKRKYNLPLLCTIRLPEEGGKREIKNRVEIYQAVIPFCNFFDIEIFSNEAPFLRQLSIKNNITLIGSYHNFINTPSMEQLEEVFDRGKTMGMDIIKIATMVNEKKDIETLLYFTLRHKLDRIIVLGMGQKGIPSRIINPVFGSMITYASLNEISAPGQIHLKDMVHIFKVMGLRG</sequence>
<evidence type="ECO:0000255" key="1">
    <source>
        <dbReference type="HAMAP-Rule" id="MF_00214"/>
    </source>
</evidence>
<keyword id="KW-0028">Amino-acid biosynthesis</keyword>
<keyword id="KW-0057">Aromatic amino acid biosynthesis</keyword>
<keyword id="KW-0456">Lyase</keyword>
<keyword id="KW-1185">Reference proteome</keyword>
<keyword id="KW-0704">Schiff base</keyword>
<reference key="1">
    <citation type="submission" date="2008-08" db="EMBL/GenBank/DDBJ databases">
        <title>The complete genome sequence of Thermodesulfovibrio yellowstonii strain ATCC 51303 / DSM 11347 / YP87.</title>
        <authorList>
            <person name="Dodson R.J."/>
            <person name="Durkin A.S."/>
            <person name="Wu M."/>
            <person name="Eisen J."/>
            <person name="Sutton G."/>
        </authorList>
    </citation>
    <scope>NUCLEOTIDE SEQUENCE [LARGE SCALE GENOMIC DNA]</scope>
    <source>
        <strain>ATCC 51303 / DSM 11347 / YP87</strain>
    </source>
</reference>
<feature type="chain" id="PRO_1000099925" description="3-dehydroquinate dehydratase">
    <location>
        <begin position="1"/>
        <end position="226"/>
    </location>
</feature>
<feature type="active site" description="Proton donor/acceptor" evidence="1">
    <location>
        <position position="120"/>
    </location>
</feature>
<feature type="active site" description="Schiff-base intermediate with substrate" evidence="1">
    <location>
        <position position="147"/>
    </location>
</feature>
<feature type="binding site" evidence="1">
    <location>
        <begin position="33"/>
        <end position="35"/>
    </location>
    <ligand>
        <name>3-dehydroquinate</name>
        <dbReference type="ChEBI" id="CHEBI:32364"/>
    </ligand>
</feature>
<feature type="binding site" evidence="1">
    <location>
        <position position="65"/>
    </location>
    <ligand>
        <name>3-dehydroquinate</name>
        <dbReference type="ChEBI" id="CHEBI:32364"/>
    </ligand>
</feature>
<feature type="binding site" evidence="1">
    <location>
        <position position="186"/>
    </location>
    <ligand>
        <name>3-dehydroquinate</name>
        <dbReference type="ChEBI" id="CHEBI:32364"/>
    </ligand>
</feature>
<feature type="binding site" evidence="1">
    <location>
        <position position="205"/>
    </location>
    <ligand>
        <name>3-dehydroquinate</name>
        <dbReference type="ChEBI" id="CHEBI:32364"/>
    </ligand>
</feature>
<feature type="binding site" evidence="1">
    <location>
        <position position="209"/>
    </location>
    <ligand>
        <name>3-dehydroquinate</name>
        <dbReference type="ChEBI" id="CHEBI:32364"/>
    </ligand>
</feature>
<comment type="function">
    <text evidence="1">Involved in the third step of the chorismate pathway, which leads to the biosynthesis of aromatic amino acids. Catalyzes the cis-dehydration of 3-dehydroquinate (DHQ) and introduces the first double bond of the aromatic ring to yield 3-dehydroshikimate.</text>
</comment>
<comment type="catalytic activity">
    <reaction evidence="1">
        <text>3-dehydroquinate = 3-dehydroshikimate + H2O</text>
        <dbReference type="Rhea" id="RHEA:21096"/>
        <dbReference type="ChEBI" id="CHEBI:15377"/>
        <dbReference type="ChEBI" id="CHEBI:16630"/>
        <dbReference type="ChEBI" id="CHEBI:32364"/>
        <dbReference type="EC" id="4.2.1.10"/>
    </reaction>
</comment>
<comment type="pathway">
    <text evidence="1">Metabolic intermediate biosynthesis; chorismate biosynthesis; chorismate from D-erythrose 4-phosphate and phosphoenolpyruvate: step 3/7.</text>
</comment>
<comment type="subunit">
    <text evidence="1">Homodimer.</text>
</comment>
<comment type="similarity">
    <text evidence="1">Belongs to the type-I 3-dehydroquinase family.</text>
</comment>
<name>AROD_THEYD</name>
<dbReference type="EC" id="4.2.1.10" evidence="1"/>
<dbReference type="EMBL" id="CP001147">
    <property type="protein sequence ID" value="ACI20796.1"/>
    <property type="molecule type" value="Genomic_DNA"/>
</dbReference>
<dbReference type="RefSeq" id="WP_012545528.1">
    <property type="nucleotide sequence ID" value="NC_011296.1"/>
</dbReference>
<dbReference type="RefSeq" id="YP_002249570.1">
    <property type="nucleotide sequence ID" value="NC_011296.1"/>
</dbReference>
<dbReference type="SMR" id="B5YH80"/>
<dbReference type="FunCoup" id="B5YH80">
    <property type="interactions" value="88"/>
</dbReference>
<dbReference type="STRING" id="289376.THEYE_A1779"/>
<dbReference type="EnsemblBacteria" id="ACI20796">
    <property type="protein sequence ID" value="ACI20796"/>
    <property type="gene ID" value="THEYE_A1779"/>
</dbReference>
<dbReference type="KEGG" id="tye:THEYE_A1779"/>
<dbReference type="PATRIC" id="fig|289376.4.peg.1735"/>
<dbReference type="eggNOG" id="COG0710">
    <property type="taxonomic scope" value="Bacteria"/>
</dbReference>
<dbReference type="HOGENOM" id="CLU_064444_2_1_0"/>
<dbReference type="InParanoid" id="B5YH80"/>
<dbReference type="OrthoDB" id="9813659at2"/>
<dbReference type="UniPathway" id="UPA00053">
    <property type="reaction ID" value="UER00086"/>
</dbReference>
<dbReference type="Proteomes" id="UP000000718">
    <property type="component" value="Chromosome"/>
</dbReference>
<dbReference type="GO" id="GO:0003855">
    <property type="term" value="F:3-dehydroquinate dehydratase activity"/>
    <property type="evidence" value="ECO:0000318"/>
    <property type="project" value="GO_Central"/>
</dbReference>
<dbReference type="GO" id="GO:0046279">
    <property type="term" value="P:3,4-dihydroxybenzoate biosynthetic process"/>
    <property type="evidence" value="ECO:0000318"/>
    <property type="project" value="GO_Central"/>
</dbReference>
<dbReference type="GO" id="GO:0008652">
    <property type="term" value="P:amino acid biosynthetic process"/>
    <property type="evidence" value="ECO:0007669"/>
    <property type="project" value="UniProtKB-KW"/>
</dbReference>
<dbReference type="GO" id="GO:0009073">
    <property type="term" value="P:aromatic amino acid family biosynthetic process"/>
    <property type="evidence" value="ECO:0007669"/>
    <property type="project" value="UniProtKB-KW"/>
</dbReference>
<dbReference type="GO" id="GO:0009423">
    <property type="term" value="P:chorismate biosynthetic process"/>
    <property type="evidence" value="ECO:0007669"/>
    <property type="project" value="UniProtKB-UniRule"/>
</dbReference>
<dbReference type="CDD" id="cd00502">
    <property type="entry name" value="DHQase_I"/>
    <property type="match status" value="1"/>
</dbReference>
<dbReference type="FunFam" id="3.20.20.70:FF:000290">
    <property type="entry name" value="3-dehydroquinate dehydratase"/>
    <property type="match status" value="1"/>
</dbReference>
<dbReference type="Gene3D" id="3.20.20.70">
    <property type="entry name" value="Aldolase class I"/>
    <property type="match status" value="1"/>
</dbReference>
<dbReference type="HAMAP" id="MF_00214">
    <property type="entry name" value="AroD"/>
    <property type="match status" value="1"/>
</dbReference>
<dbReference type="InterPro" id="IPR018508">
    <property type="entry name" value="3-dehydroquinate_DH_AS"/>
</dbReference>
<dbReference type="InterPro" id="IPR013785">
    <property type="entry name" value="Aldolase_TIM"/>
</dbReference>
<dbReference type="InterPro" id="IPR001381">
    <property type="entry name" value="DHquinase_I"/>
</dbReference>
<dbReference type="InterPro" id="IPR050146">
    <property type="entry name" value="Type-I_3-dehydroquinase"/>
</dbReference>
<dbReference type="NCBIfam" id="TIGR01093">
    <property type="entry name" value="aroD"/>
    <property type="match status" value="1"/>
</dbReference>
<dbReference type="PANTHER" id="PTHR43699">
    <property type="entry name" value="3-DEHYDROQUINATE DEHYDRATASE"/>
    <property type="match status" value="1"/>
</dbReference>
<dbReference type="PANTHER" id="PTHR43699:SF1">
    <property type="entry name" value="3-DEHYDROQUINATE DEHYDRATASE"/>
    <property type="match status" value="1"/>
</dbReference>
<dbReference type="Pfam" id="PF01487">
    <property type="entry name" value="DHquinase_I"/>
    <property type="match status" value="1"/>
</dbReference>
<dbReference type="SUPFAM" id="SSF51569">
    <property type="entry name" value="Aldolase"/>
    <property type="match status" value="1"/>
</dbReference>
<dbReference type="PROSITE" id="PS01028">
    <property type="entry name" value="DEHYDROQUINASE_I"/>
    <property type="match status" value="1"/>
</dbReference>
<protein>
    <recommendedName>
        <fullName evidence="1">3-dehydroquinate dehydratase</fullName>
        <shortName evidence="1">3-dehydroquinase</shortName>
        <ecNumber evidence="1">4.2.1.10</ecNumber>
    </recommendedName>
    <alternativeName>
        <fullName evidence="1">Type I DHQase</fullName>
    </alternativeName>
    <alternativeName>
        <fullName evidence="1">Type I dehydroquinase</fullName>
        <shortName evidence="1">DHQ1</shortName>
    </alternativeName>
</protein>
<organism>
    <name type="scientific">Thermodesulfovibrio yellowstonii (strain ATCC 51303 / DSM 11347 / YP87)</name>
    <dbReference type="NCBI Taxonomy" id="289376"/>
    <lineage>
        <taxon>Bacteria</taxon>
        <taxon>Pseudomonadati</taxon>
        <taxon>Nitrospirota</taxon>
        <taxon>Thermodesulfovibrionia</taxon>
        <taxon>Thermodesulfovibrionales</taxon>
        <taxon>Thermodesulfovibrionaceae</taxon>
        <taxon>Thermodesulfovibrio</taxon>
    </lineage>
</organism>